<comment type="function">
    <text evidence="2">Involved in the organization of the Ori region of the chromosome into a macrodomain (MD) (By similarity). It constrains DNA mobility in the Ori macrodomain and limits long-distance DNA interactions with other chromosomal regions (By similarity).</text>
</comment>
<comment type="similarity">
    <text evidence="4">Belongs to the MaoP family.</text>
</comment>
<sequence length="112" mass="13134">MAESFTTTNRYFDNKHYPRGFSRHGDFTIKEAQLLERHGYAFNELDLGKREPVTEEEKLFVAVCRGEREPVTEAERVWSKYMTRIKRPKRFHTLSGGKPQVEGAEDYTDSDD</sequence>
<reference key="1">
    <citation type="journal article" date="2002" name="Proc. Natl. Acad. Sci. U.S.A.">
        <title>Extensive mosaic structure revealed by the complete genome sequence of uropathogenic Escherichia coli.</title>
        <authorList>
            <person name="Welch R.A."/>
            <person name="Burland V."/>
            <person name="Plunkett G. III"/>
            <person name="Redford P."/>
            <person name="Roesch P."/>
            <person name="Rasko D."/>
            <person name="Buckles E.L."/>
            <person name="Liou S.-R."/>
            <person name="Boutin A."/>
            <person name="Hackett J."/>
            <person name="Stroud D."/>
            <person name="Mayhew G.F."/>
            <person name="Rose D.J."/>
            <person name="Zhou S."/>
            <person name="Schwartz D.C."/>
            <person name="Perna N.T."/>
            <person name="Mobley H.L.T."/>
            <person name="Donnenberg M.S."/>
            <person name="Blattner F.R."/>
        </authorList>
    </citation>
    <scope>NUCLEOTIDE SEQUENCE [LARGE SCALE GENOMIC DNA]</scope>
    <source>
        <strain>CFT073 / ATCC 700928 / UPEC</strain>
    </source>
</reference>
<organism>
    <name type="scientific">Escherichia coli O6:H1 (strain CFT073 / ATCC 700928 / UPEC)</name>
    <dbReference type="NCBI Taxonomy" id="199310"/>
    <lineage>
        <taxon>Bacteria</taxon>
        <taxon>Pseudomonadati</taxon>
        <taxon>Pseudomonadota</taxon>
        <taxon>Gammaproteobacteria</taxon>
        <taxon>Enterobacterales</taxon>
        <taxon>Enterobacteriaceae</taxon>
        <taxon>Escherichia</taxon>
    </lineage>
</organism>
<keyword id="KW-1185">Reference proteome</keyword>
<feature type="initiator methionine" description="Removed" evidence="1">
    <location>
        <position position="1"/>
    </location>
</feature>
<feature type="chain" id="PRO_0000169643" description="Macrodomain Ori protein">
    <location>
        <begin position="2"/>
        <end position="112"/>
    </location>
</feature>
<feature type="region of interest" description="Disordered" evidence="3">
    <location>
        <begin position="91"/>
        <end position="112"/>
    </location>
</feature>
<feature type="compositionally biased region" description="Acidic residues" evidence="3">
    <location>
        <begin position="103"/>
        <end position="112"/>
    </location>
</feature>
<dbReference type="EMBL" id="AE014075">
    <property type="protein sequence ID" value="AAN83117.1"/>
    <property type="molecule type" value="Genomic_DNA"/>
</dbReference>
<dbReference type="SMR" id="P0ADN3"/>
<dbReference type="STRING" id="199310.c4686"/>
<dbReference type="KEGG" id="ecc:c4686"/>
<dbReference type="eggNOG" id="COG3085">
    <property type="taxonomic scope" value="Bacteria"/>
</dbReference>
<dbReference type="HOGENOM" id="CLU_144599_2_2_6"/>
<dbReference type="BioCyc" id="ECOL199310:C4686-MONOMER"/>
<dbReference type="Proteomes" id="UP000001410">
    <property type="component" value="Chromosome"/>
</dbReference>
<dbReference type="InterPro" id="IPR007335">
    <property type="entry name" value="DUF413"/>
</dbReference>
<dbReference type="NCBIfam" id="NF008251">
    <property type="entry name" value="PRK11027.1-1"/>
    <property type="match status" value="1"/>
</dbReference>
<dbReference type="NCBIfam" id="NF008252">
    <property type="entry name" value="PRK11027.1-2"/>
    <property type="match status" value="1"/>
</dbReference>
<dbReference type="NCBIfam" id="NF008253">
    <property type="entry name" value="PRK11027.1-4"/>
    <property type="match status" value="1"/>
</dbReference>
<dbReference type="Pfam" id="PF04219">
    <property type="entry name" value="DUF413"/>
    <property type="match status" value="1"/>
</dbReference>
<accession>P0ADN3</accession>
<accession>P27827</accession>
<name>MAOP_ECOL6</name>
<protein>
    <recommendedName>
        <fullName evidence="2">Macrodomain Ori protein</fullName>
    </recommendedName>
</protein>
<evidence type="ECO:0000250" key="1"/>
<evidence type="ECO:0000250" key="2">
    <source>
        <dbReference type="UniProtKB" id="P0ADN2"/>
    </source>
</evidence>
<evidence type="ECO:0000256" key="3">
    <source>
        <dbReference type="SAM" id="MobiDB-lite"/>
    </source>
</evidence>
<evidence type="ECO:0000305" key="4"/>
<proteinExistence type="inferred from homology"/>
<gene>
    <name evidence="2" type="primary">maoP</name>
    <name type="synonym">yifE</name>
    <name type="ordered locus">c4686</name>
</gene>